<accession>A4QLA8</accession>
<gene>
    <name type="primary">rps4</name>
</gene>
<proteinExistence type="inferred from homology"/>
<comment type="function">
    <text evidence="1">One of the primary rRNA binding proteins, it binds directly to 16S rRNA where it nucleates assembly of the body of the 30S subunit.</text>
</comment>
<comment type="function">
    <text evidence="1">With S5 and S12 plays an important role in translational accuracy.</text>
</comment>
<comment type="subunit">
    <text evidence="1">Part of the 30S ribosomal subunit. Contacts protein S5. The interaction surface between S4 and S5 is involved in control of translational fidelity (By similarity).</text>
</comment>
<comment type="subcellular location">
    <subcellularLocation>
        <location>Plastid</location>
        <location>Chloroplast</location>
    </subcellularLocation>
</comment>
<comment type="similarity">
    <text evidence="3">Belongs to the universal ribosomal protein uS4 family.</text>
</comment>
<name>RR4_LEPVR</name>
<evidence type="ECO:0000250" key="1"/>
<evidence type="ECO:0000256" key="2">
    <source>
        <dbReference type="SAM" id="MobiDB-lite"/>
    </source>
</evidence>
<evidence type="ECO:0000305" key="3"/>
<protein>
    <recommendedName>
        <fullName evidence="3">Small ribosomal subunit protein uS4c</fullName>
    </recommendedName>
    <alternativeName>
        <fullName>30S ribosomal protein S4, chloroplastic</fullName>
    </alternativeName>
</protein>
<feature type="chain" id="PRO_0000293429" description="Small ribosomal subunit protein uS4c">
    <location>
        <begin position="1"/>
        <end position="201"/>
    </location>
</feature>
<feature type="domain" description="S4 RNA-binding">
    <location>
        <begin position="89"/>
        <end position="152"/>
    </location>
</feature>
<feature type="region of interest" description="Disordered" evidence="2">
    <location>
        <begin position="20"/>
        <end position="44"/>
    </location>
</feature>
<reference key="1">
    <citation type="submission" date="2007-03" db="EMBL/GenBank/DDBJ databases">
        <title>Sequencing analysis of Lepidium virginicum JO26 chloroplast DNA.</title>
        <authorList>
            <person name="Hosouchi T."/>
            <person name="Tsuruoka H."/>
            <person name="Kotani H."/>
        </authorList>
    </citation>
    <scope>NUCLEOTIDE SEQUENCE [LARGE SCALE GENOMIC DNA]</scope>
</reference>
<organism>
    <name type="scientific">Lepidium virginicum</name>
    <name type="common">Virginia pepperweed</name>
    <dbReference type="NCBI Taxonomy" id="59292"/>
    <lineage>
        <taxon>Eukaryota</taxon>
        <taxon>Viridiplantae</taxon>
        <taxon>Streptophyta</taxon>
        <taxon>Embryophyta</taxon>
        <taxon>Tracheophyta</taxon>
        <taxon>Spermatophyta</taxon>
        <taxon>Magnoliopsida</taxon>
        <taxon>eudicotyledons</taxon>
        <taxon>Gunneridae</taxon>
        <taxon>Pentapetalae</taxon>
        <taxon>rosids</taxon>
        <taxon>malvids</taxon>
        <taxon>Brassicales</taxon>
        <taxon>Brassicaceae</taxon>
        <taxon>Lepidieae</taxon>
        <taxon>Lepidium</taxon>
    </lineage>
</organism>
<geneLocation type="chloroplast"/>
<sequence>MSRYRGPRFKKIRRLGALPGLTSKRPKAGSDLRNQSRSGKKSQYRIRLEEKQKLRFHYGLTERQLLKYVRIAGKAKGSTGQVLLQLLEMRLDNILFRLGMALTIPQARQLVNHGHILVNGRIVDIPSYRCKPRDIITVKDEQNSRTLVQNLLDSSAPEELPNHLTLHTFQYEGLVNQIIDRKCVGLKINELLVVEYYSRQT</sequence>
<dbReference type="EMBL" id="AP009374">
    <property type="protein sequence ID" value="BAF50463.1"/>
    <property type="molecule type" value="Genomic_DNA"/>
</dbReference>
<dbReference type="RefSeq" id="YP_001123639.1">
    <property type="nucleotide sequence ID" value="NC_009273.1"/>
</dbReference>
<dbReference type="SMR" id="A4QLA8"/>
<dbReference type="GeneID" id="4962023"/>
<dbReference type="GO" id="GO:0009507">
    <property type="term" value="C:chloroplast"/>
    <property type="evidence" value="ECO:0007669"/>
    <property type="project" value="UniProtKB-SubCell"/>
</dbReference>
<dbReference type="GO" id="GO:0015935">
    <property type="term" value="C:small ribosomal subunit"/>
    <property type="evidence" value="ECO:0007669"/>
    <property type="project" value="InterPro"/>
</dbReference>
<dbReference type="GO" id="GO:0019843">
    <property type="term" value="F:rRNA binding"/>
    <property type="evidence" value="ECO:0007669"/>
    <property type="project" value="UniProtKB-UniRule"/>
</dbReference>
<dbReference type="GO" id="GO:0003735">
    <property type="term" value="F:structural constituent of ribosome"/>
    <property type="evidence" value="ECO:0007669"/>
    <property type="project" value="InterPro"/>
</dbReference>
<dbReference type="GO" id="GO:0042274">
    <property type="term" value="P:ribosomal small subunit biogenesis"/>
    <property type="evidence" value="ECO:0007669"/>
    <property type="project" value="TreeGrafter"/>
</dbReference>
<dbReference type="GO" id="GO:0006412">
    <property type="term" value="P:translation"/>
    <property type="evidence" value="ECO:0007669"/>
    <property type="project" value="UniProtKB-UniRule"/>
</dbReference>
<dbReference type="CDD" id="cd00165">
    <property type="entry name" value="S4"/>
    <property type="match status" value="1"/>
</dbReference>
<dbReference type="FunFam" id="1.10.1050.10:FF:000002">
    <property type="entry name" value="30S ribosomal protein S4, chloroplastic"/>
    <property type="match status" value="1"/>
</dbReference>
<dbReference type="FunFam" id="3.10.290.10:FF:000081">
    <property type="entry name" value="30S ribosomal protein S4, chloroplastic"/>
    <property type="match status" value="1"/>
</dbReference>
<dbReference type="Gene3D" id="1.10.1050.10">
    <property type="entry name" value="Ribosomal Protein S4 Delta 41, Chain A, domain 1"/>
    <property type="match status" value="1"/>
</dbReference>
<dbReference type="Gene3D" id="3.10.290.10">
    <property type="entry name" value="RNA-binding S4 domain"/>
    <property type="match status" value="1"/>
</dbReference>
<dbReference type="HAMAP" id="MF_01306_B">
    <property type="entry name" value="Ribosomal_uS4_B"/>
    <property type="match status" value="1"/>
</dbReference>
<dbReference type="InterPro" id="IPR022801">
    <property type="entry name" value="Ribosomal_uS4"/>
</dbReference>
<dbReference type="InterPro" id="IPR005709">
    <property type="entry name" value="Ribosomal_uS4_bac-type"/>
</dbReference>
<dbReference type="InterPro" id="IPR018079">
    <property type="entry name" value="Ribosomal_uS4_CS"/>
</dbReference>
<dbReference type="InterPro" id="IPR001912">
    <property type="entry name" value="Ribosomal_uS4_N"/>
</dbReference>
<dbReference type="InterPro" id="IPR002942">
    <property type="entry name" value="S4_RNA-bd"/>
</dbReference>
<dbReference type="InterPro" id="IPR036986">
    <property type="entry name" value="S4_RNA-bd_sf"/>
</dbReference>
<dbReference type="NCBIfam" id="NF003717">
    <property type="entry name" value="PRK05327.1"/>
    <property type="match status" value="1"/>
</dbReference>
<dbReference type="NCBIfam" id="TIGR01017">
    <property type="entry name" value="rpsD_bact"/>
    <property type="match status" value="1"/>
</dbReference>
<dbReference type="PANTHER" id="PTHR11831">
    <property type="entry name" value="30S 40S RIBOSOMAL PROTEIN"/>
    <property type="match status" value="1"/>
</dbReference>
<dbReference type="PANTHER" id="PTHR11831:SF4">
    <property type="entry name" value="SMALL RIBOSOMAL SUBUNIT PROTEIN US4M"/>
    <property type="match status" value="1"/>
</dbReference>
<dbReference type="Pfam" id="PF00163">
    <property type="entry name" value="Ribosomal_S4"/>
    <property type="match status" value="1"/>
</dbReference>
<dbReference type="Pfam" id="PF01479">
    <property type="entry name" value="S4"/>
    <property type="match status" value="1"/>
</dbReference>
<dbReference type="SMART" id="SM01390">
    <property type="entry name" value="Ribosomal_S4"/>
    <property type="match status" value="1"/>
</dbReference>
<dbReference type="SMART" id="SM00363">
    <property type="entry name" value="S4"/>
    <property type="match status" value="1"/>
</dbReference>
<dbReference type="SUPFAM" id="SSF55174">
    <property type="entry name" value="Alpha-L RNA-binding motif"/>
    <property type="match status" value="1"/>
</dbReference>
<dbReference type="PROSITE" id="PS00632">
    <property type="entry name" value="RIBOSOMAL_S4"/>
    <property type="match status" value="1"/>
</dbReference>
<dbReference type="PROSITE" id="PS50889">
    <property type="entry name" value="S4"/>
    <property type="match status" value="1"/>
</dbReference>
<keyword id="KW-0150">Chloroplast</keyword>
<keyword id="KW-0934">Plastid</keyword>
<keyword id="KW-0687">Ribonucleoprotein</keyword>
<keyword id="KW-0689">Ribosomal protein</keyword>
<keyword id="KW-0694">RNA-binding</keyword>
<keyword id="KW-0699">rRNA-binding</keyword>